<organism>
    <name type="scientific">Paraburkholderia xenovorans (strain LB400)</name>
    <dbReference type="NCBI Taxonomy" id="266265"/>
    <lineage>
        <taxon>Bacteria</taxon>
        <taxon>Pseudomonadati</taxon>
        <taxon>Pseudomonadota</taxon>
        <taxon>Betaproteobacteria</taxon>
        <taxon>Burkholderiales</taxon>
        <taxon>Burkholderiaceae</taxon>
        <taxon>Paraburkholderia</taxon>
    </lineage>
</organism>
<sequence>MSNKKADSKPQSRYPVNLLDTPFPMRGDLPKREPQWVKEWQERKVYETIRAASKGRKKFILHDGPPYANGDIHLGHAVNKILKDMIVKARNLAGFDAVYVPGWDCHGMPIEIQIEKQFGKSLPAAEVMQKARAYATEQIEKQKVGFRRLGVLGDWDNPYKTMNFTNEAGEIRALAKIMEKGYVFRGLKPVNWCFDCGSALAEAEVEYKDKTDPTIDVLFSFAEPEKTAQAFGLNALPRNEGGIVIWTTTPWTIPANQALNLHPEIVYALVDTSRGLLILAQERVEACLKQYGLEGTIVATTPGAKLVNLRFNHPLASAHPSYKRTSPVYLGDYVTTESGTGVVHSSPAYGVEDFVSCKAHGMSDSDIINPVMGDGRYIESLALFGGLSIWAANPQIVEALQGAGTLMRTENYTHSYMHCWRHKTPIIYRATSQWFAGMDVKPNDTDRTLRETALEGIENTAFYPAWGKQRLFSMIANRPDWTLSRQRQWGVPMAFFVHKETGELHPRTLELLEEVAQRVEKAGIEAWQSLDPRELLGDEANMYEKNRDTLDVWFDSGTTHWHVLRGSHKDELQFPADLYLEGSDQHRGWFHSSLLTASMLDGRPPYNALLTHGFTVDGEGRKMSKSLGNGIDPHEVANRLGAEIIRLWIASTDYSGELAISEEILKRVTEGYRRIRNTLRFLLANLSDFDFAQHARPVEDWLEIDRYAVALSANLQNDILSHYEKYEFHPVVAKLQTFCSEDLGGFYLDVLKDRLYTTAADSVARRAAQTALYHIAHGLLRLMAPFLSFTAEEAWKIFEPNSETIFTETYHAFPAVPEAGALLDKWTLLRAARSDVTKALEEARVANLIGSSLQAEVEIRASGARYDALTSLGDDLKFVLITSAASVVKVDSEAEEGVEVIASKYLKCERCWHYRADVGANAEHPTLCGRCFSNLFGNGETRSAA</sequence>
<feature type="chain" id="PRO_1000022051" description="Isoleucine--tRNA ligase">
    <location>
        <begin position="1"/>
        <end position="945"/>
    </location>
</feature>
<feature type="short sequence motif" description="'HIGH' region">
    <location>
        <begin position="66"/>
        <end position="76"/>
    </location>
</feature>
<feature type="short sequence motif" description="'KMSKS' region">
    <location>
        <begin position="622"/>
        <end position="626"/>
    </location>
</feature>
<feature type="binding site" evidence="1">
    <location>
        <position position="581"/>
    </location>
    <ligand>
        <name>L-isoleucyl-5'-AMP</name>
        <dbReference type="ChEBI" id="CHEBI:178002"/>
    </ligand>
</feature>
<feature type="binding site" evidence="1">
    <location>
        <position position="625"/>
    </location>
    <ligand>
        <name>ATP</name>
        <dbReference type="ChEBI" id="CHEBI:30616"/>
    </ligand>
</feature>
<feature type="binding site" evidence="1">
    <location>
        <position position="908"/>
    </location>
    <ligand>
        <name>Zn(2+)</name>
        <dbReference type="ChEBI" id="CHEBI:29105"/>
    </ligand>
</feature>
<feature type="binding site" evidence="1">
    <location>
        <position position="911"/>
    </location>
    <ligand>
        <name>Zn(2+)</name>
        <dbReference type="ChEBI" id="CHEBI:29105"/>
    </ligand>
</feature>
<feature type="binding site" evidence="1">
    <location>
        <position position="928"/>
    </location>
    <ligand>
        <name>Zn(2+)</name>
        <dbReference type="ChEBI" id="CHEBI:29105"/>
    </ligand>
</feature>
<feature type="binding site" evidence="1">
    <location>
        <position position="931"/>
    </location>
    <ligand>
        <name>Zn(2+)</name>
        <dbReference type="ChEBI" id="CHEBI:29105"/>
    </ligand>
</feature>
<accession>Q13UW2</accession>
<reference key="1">
    <citation type="journal article" date="2006" name="Proc. Natl. Acad. Sci. U.S.A.">
        <title>Burkholderia xenovorans LB400 harbors a multi-replicon, 9.73-Mbp genome shaped for versatility.</title>
        <authorList>
            <person name="Chain P.S.G."/>
            <person name="Denef V.J."/>
            <person name="Konstantinidis K.T."/>
            <person name="Vergez L.M."/>
            <person name="Agullo L."/>
            <person name="Reyes V.L."/>
            <person name="Hauser L."/>
            <person name="Cordova M."/>
            <person name="Gomez L."/>
            <person name="Gonzalez M."/>
            <person name="Land M."/>
            <person name="Lao V."/>
            <person name="Larimer F."/>
            <person name="LiPuma J.J."/>
            <person name="Mahenthiralingam E."/>
            <person name="Malfatti S.A."/>
            <person name="Marx C.J."/>
            <person name="Parnell J.J."/>
            <person name="Ramette A."/>
            <person name="Richardson P."/>
            <person name="Seeger M."/>
            <person name="Smith D."/>
            <person name="Spilker T."/>
            <person name="Sul W.J."/>
            <person name="Tsoi T.V."/>
            <person name="Ulrich L.E."/>
            <person name="Zhulin I.B."/>
            <person name="Tiedje J.M."/>
        </authorList>
    </citation>
    <scope>NUCLEOTIDE SEQUENCE [LARGE SCALE GENOMIC DNA]</scope>
    <source>
        <strain>LB400</strain>
    </source>
</reference>
<comment type="function">
    <text evidence="1">Catalyzes the attachment of isoleucine to tRNA(Ile). As IleRS can inadvertently accommodate and process structurally similar amino acids such as valine, to avoid such errors it has two additional distinct tRNA(Ile)-dependent editing activities. One activity is designated as 'pretransfer' editing and involves the hydrolysis of activated Val-AMP. The other activity is designated 'posttransfer' editing and involves deacylation of mischarged Val-tRNA(Ile).</text>
</comment>
<comment type="catalytic activity">
    <reaction evidence="1">
        <text>tRNA(Ile) + L-isoleucine + ATP = L-isoleucyl-tRNA(Ile) + AMP + diphosphate</text>
        <dbReference type="Rhea" id="RHEA:11060"/>
        <dbReference type="Rhea" id="RHEA-COMP:9666"/>
        <dbReference type="Rhea" id="RHEA-COMP:9695"/>
        <dbReference type="ChEBI" id="CHEBI:30616"/>
        <dbReference type="ChEBI" id="CHEBI:33019"/>
        <dbReference type="ChEBI" id="CHEBI:58045"/>
        <dbReference type="ChEBI" id="CHEBI:78442"/>
        <dbReference type="ChEBI" id="CHEBI:78528"/>
        <dbReference type="ChEBI" id="CHEBI:456215"/>
        <dbReference type="EC" id="6.1.1.5"/>
    </reaction>
</comment>
<comment type="cofactor">
    <cofactor evidence="1">
        <name>Zn(2+)</name>
        <dbReference type="ChEBI" id="CHEBI:29105"/>
    </cofactor>
    <text evidence="1">Binds 1 zinc ion per subunit.</text>
</comment>
<comment type="subunit">
    <text evidence="1">Monomer.</text>
</comment>
<comment type="subcellular location">
    <subcellularLocation>
        <location evidence="1">Cytoplasm</location>
    </subcellularLocation>
</comment>
<comment type="domain">
    <text evidence="1">IleRS has two distinct active sites: one for aminoacylation and one for editing. The misactivated valine is translocated from the active site to the editing site, which sterically excludes the correctly activated isoleucine. The single editing site contains two valyl binding pockets, one specific for each substrate (Val-AMP or Val-tRNA(Ile)).</text>
</comment>
<comment type="similarity">
    <text evidence="1">Belongs to the class-I aminoacyl-tRNA synthetase family. IleS type 1 subfamily.</text>
</comment>
<dbReference type="EC" id="6.1.1.5" evidence="1"/>
<dbReference type="EMBL" id="CP000270">
    <property type="protein sequence ID" value="ABE32127.1"/>
    <property type="molecule type" value="Genomic_DNA"/>
</dbReference>
<dbReference type="RefSeq" id="WP_011489631.1">
    <property type="nucleotide sequence ID" value="NC_007951.1"/>
</dbReference>
<dbReference type="SMR" id="Q13UW2"/>
<dbReference type="STRING" id="266265.Bxe_A0807"/>
<dbReference type="KEGG" id="bxb:DR64_2972"/>
<dbReference type="KEGG" id="bxe:Bxe_A0807"/>
<dbReference type="PATRIC" id="fig|266265.5.peg.3779"/>
<dbReference type="eggNOG" id="COG0060">
    <property type="taxonomic scope" value="Bacteria"/>
</dbReference>
<dbReference type="OrthoDB" id="9810365at2"/>
<dbReference type="Proteomes" id="UP000001817">
    <property type="component" value="Chromosome 1"/>
</dbReference>
<dbReference type="GO" id="GO:0005829">
    <property type="term" value="C:cytosol"/>
    <property type="evidence" value="ECO:0007669"/>
    <property type="project" value="TreeGrafter"/>
</dbReference>
<dbReference type="GO" id="GO:0002161">
    <property type="term" value="F:aminoacyl-tRNA deacylase activity"/>
    <property type="evidence" value="ECO:0007669"/>
    <property type="project" value="InterPro"/>
</dbReference>
<dbReference type="GO" id="GO:0005524">
    <property type="term" value="F:ATP binding"/>
    <property type="evidence" value="ECO:0007669"/>
    <property type="project" value="UniProtKB-UniRule"/>
</dbReference>
<dbReference type="GO" id="GO:0004822">
    <property type="term" value="F:isoleucine-tRNA ligase activity"/>
    <property type="evidence" value="ECO:0007669"/>
    <property type="project" value="UniProtKB-UniRule"/>
</dbReference>
<dbReference type="GO" id="GO:0000049">
    <property type="term" value="F:tRNA binding"/>
    <property type="evidence" value="ECO:0007669"/>
    <property type="project" value="InterPro"/>
</dbReference>
<dbReference type="GO" id="GO:0008270">
    <property type="term" value="F:zinc ion binding"/>
    <property type="evidence" value="ECO:0007669"/>
    <property type="project" value="UniProtKB-UniRule"/>
</dbReference>
<dbReference type="GO" id="GO:0006428">
    <property type="term" value="P:isoleucyl-tRNA aminoacylation"/>
    <property type="evidence" value="ECO:0007669"/>
    <property type="project" value="UniProtKB-UniRule"/>
</dbReference>
<dbReference type="CDD" id="cd07960">
    <property type="entry name" value="Anticodon_Ia_Ile_BEm"/>
    <property type="match status" value="1"/>
</dbReference>
<dbReference type="CDD" id="cd00818">
    <property type="entry name" value="IleRS_core"/>
    <property type="match status" value="1"/>
</dbReference>
<dbReference type="FunFam" id="3.40.50.620:FF:000042">
    <property type="entry name" value="Isoleucine--tRNA ligase"/>
    <property type="match status" value="1"/>
</dbReference>
<dbReference type="FunFam" id="3.40.50.620:FF:000048">
    <property type="entry name" value="Isoleucine--tRNA ligase"/>
    <property type="match status" value="1"/>
</dbReference>
<dbReference type="Gene3D" id="1.10.730.20">
    <property type="match status" value="1"/>
</dbReference>
<dbReference type="Gene3D" id="3.40.50.620">
    <property type="entry name" value="HUPs"/>
    <property type="match status" value="2"/>
</dbReference>
<dbReference type="Gene3D" id="3.90.740.10">
    <property type="entry name" value="Valyl/Leucyl/Isoleucyl-tRNA synthetase, editing domain"/>
    <property type="match status" value="1"/>
</dbReference>
<dbReference type="HAMAP" id="MF_02002">
    <property type="entry name" value="Ile_tRNA_synth_type1"/>
    <property type="match status" value="1"/>
</dbReference>
<dbReference type="InterPro" id="IPR001412">
    <property type="entry name" value="aa-tRNA-synth_I_CS"/>
</dbReference>
<dbReference type="InterPro" id="IPR002300">
    <property type="entry name" value="aa-tRNA-synth_Ia"/>
</dbReference>
<dbReference type="InterPro" id="IPR033708">
    <property type="entry name" value="Anticodon_Ile_BEm"/>
</dbReference>
<dbReference type="InterPro" id="IPR002301">
    <property type="entry name" value="Ile-tRNA-ligase"/>
</dbReference>
<dbReference type="InterPro" id="IPR023585">
    <property type="entry name" value="Ile-tRNA-ligase_type1"/>
</dbReference>
<dbReference type="InterPro" id="IPR050081">
    <property type="entry name" value="Ile-tRNA_ligase"/>
</dbReference>
<dbReference type="InterPro" id="IPR013155">
    <property type="entry name" value="M/V/L/I-tRNA-synth_anticd-bd"/>
</dbReference>
<dbReference type="InterPro" id="IPR014729">
    <property type="entry name" value="Rossmann-like_a/b/a_fold"/>
</dbReference>
<dbReference type="InterPro" id="IPR009080">
    <property type="entry name" value="tRNAsynth_Ia_anticodon-bd"/>
</dbReference>
<dbReference type="InterPro" id="IPR009008">
    <property type="entry name" value="Val/Leu/Ile-tRNA-synth_edit"/>
</dbReference>
<dbReference type="InterPro" id="IPR010663">
    <property type="entry name" value="Znf_FPG/IleRS"/>
</dbReference>
<dbReference type="NCBIfam" id="TIGR00392">
    <property type="entry name" value="ileS"/>
    <property type="match status" value="1"/>
</dbReference>
<dbReference type="PANTHER" id="PTHR42765:SF1">
    <property type="entry name" value="ISOLEUCINE--TRNA LIGASE, MITOCHONDRIAL"/>
    <property type="match status" value="1"/>
</dbReference>
<dbReference type="PANTHER" id="PTHR42765">
    <property type="entry name" value="SOLEUCYL-TRNA SYNTHETASE"/>
    <property type="match status" value="1"/>
</dbReference>
<dbReference type="Pfam" id="PF08264">
    <property type="entry name" value="Anticodon_1"/>
    <property type="match status" value="1"/>
</dbReference>
<dbReference type="Pfam" id="PF00133">
    <property type="entry name" value="tRNA-synt_1"/>
    <property type="match status" value="1"/>
</dbReference>
<dbReference type="Pfam" id="PF06827">
    <property type="entry name" value="zf-FPG_IleRS"/>
    <property type="match status" value="1"/>
</dbReference>
<dbReference type="PRINTS" id="PR00984">
    <property type="entry name" value="TRNASYNTHILE"/>
</dbReference>
<dbReference type="SUPFAM" id="SSF47323">
    <property type="entry name" value="Anticodon-binding domain of a subclass of class I aminoacyl-tRNA synthetases"/>
    <property type="match status" value="1"/>
</dbReference>
<dbReference type="SUPFAM" id="SSF52374">
    <property type="entry name" value="Nucleotidylyl transferase"/>
    <property type="match status" value="1"/>
</dbReference>
<dbReference type="SUPFAM" id="SSF50677">
    <property type="entry name" value="ValRS/IleRS/LeuRS editing domain"/>
    <property type="match status" value="1"/>
</dbReference>
<dbReference type="PROSITE" id="PS00178">
    <property type="entry name" value="AA_TRNA_LIGASE_I"/>
    <property type="match status" value="1"/>
</dbReference>
<gene>
    <name evidence="1" type="primary">ileS</name>
    <name type="ordered locus">Bxeno_A3589</name>
    <name type="ORF">Bxe_A0807</name>
</gene>
<keyword id="KW-0030">Aminoacyl-tRNA synthetase</keyword>
<keyword id="KW-0067">ATP-binding</keyword>
<keyword id="KW-0963">Cytoplasm</keyword>
<keyword id="KW-0436">Ligase</keyword>
<keyword id="KW-0479">Metal-binding</keyword>
<keyword id="KW-0547">Nucleotide-binding</keyword>
<keyword id="KW-0648">Protein biosynthesis</keyword>
<keyword id="KW-1185">Reference proteome</keyword>
<keyword id="KW-0862">Zinc</keyword>
<name>SYI_PARXL</name>
<proteinExistence type="inferred from homology"/>
<protein>
    <recommendedName>
        <fullName evidence="1">Isoleucine--tRNA ligase</fullName>
        <ecNumber evidence="1">6.1.1.5</ecNumber>
    </recommendedName>
    <alternativeName>
        <fullName evidence="1">Isoleucyl-tRNA synthetase</fullName>
        <shortName evidence="1">IleRS</shortName>
    </alternativeName>
</protein>
<evidence type="ECO:0000255" key="1">
    <source>
        <dbReference type="HAMAP-Rule" id="MF_02002"/>
    </source>
</evidence>